<name>RS10_METVS</name>
<protein>
    <recommendedName>
        <fullName evidence="1">Small ribosomal subunit protein uS10</fullName>
    </recommendedName>
    <alternativeName>
        <fullName evidence="3">30S ribosomal protein S10</fullName>
    </alternativeName>
</protein>
<comment type="function">
    <text evidence="1">Involved in the binding of tRNA to the ribosomes.</text>
</comment>
<comment type="subunit">
    <text evidence="1">Part of the 30S ribosomal subunit.</text>
</comment>
<comment type="similarity">
    <text evidence="1">Belongs to the universal ribosomal protein uS10 family.</text>
</comment>
<evidence type="ECO:0000255" key="1">
    <source>
        <dbReference type="HAMAP-Rule" id="MF_00508"/>
    </source>
</evidence>
<evidence type="ECO:0000256" key="2">
    <source>
        <dbReference type="SAM" id="MobiDB-lite"/>
    </source>
</evidence>
<evidence type="ECO:0000305" key="3"/>
<sequence length="102" mass="11559">MQKARIKLSSTKHEELDSVCNQIKAIAEKTGVDMAGPIPLPTKSLKITTRKSTDGEGSSSFDRWTMRVHKRVIDIEADERTMKHIMKVRIPDAVQIEIELRS</sequence>
<dbReference type="EMBL" id="X15972">
    <property type="protein sequence ID" value="CAA34093.1"/>
    <property type="molecule type" value="Genomic_DNA"/>
</dbReference>
<dbReference type="EMBL" id="CP000742">
    <property type="protein sequence ID" value="ABR54587.1"/>
    <property type="molecule type" value="Genomic_DNA"/>
</dbReference>
<dbReference type="PIR" id="S06625">
    <property type="entry name" value="R3MX10"/>
</dbReference>
<dbReference type="RefSeq" id="WP_011972489.1">
    <property type="nucleotide sequence ID" value="NC_009634.1"/>
</dbReference>
<dbReference type="SMR" id="P14039"/>
<dbReference type="STRING" id="406327.Mevan_0681"/>
<dbReference type="GeneID" id="5324978"/>
<dbReference type="KEGG" id="mvn:Mevan_0681"/>
<dbReference type="eggNOG" id="arCOG01758">
    <property type="taxonomic scope" value="Archaea"/>
</dbReference>
<dbReference type="HOGENOM" id="CLU_122625_0_1_2"/>
<dbReference type="OrthoDB" id="371736at2157"/>
<dbReference type="Proteomes" id="UP000001107">
    <property type="component" value="Chromosome"/>
</dbReference>
<dbReference type="GO" id="GO:0015935">
    <property type="term" value="C:small ribosomal subunit"/>
    <property type="evidence" value="ECO:0007669"/>
    <property type="project" value="InterPro"/>
</dbReference>
<dbReference type="GO" id="GO:0003735">
    <property type="term" value="F:structural constituent of ribosome"/>
    <property type="evidence" value="ECO:0007669"/>
    <property type="project" value="InterPro"/>
</dbReference>
<dbReference type="GO" id="GO:0000049">
    <property type="term" value="F:tRNA binding"/>
    <property type="evidence" value="ECO:0007669"/>
    <property type="project" value="UniProtKB-UniRule"/>
</dbReference>
<dbReference type="GO" id="GO:0006412">
    <property type="term" value="P:translation"/>
    <property type="evidence" value="ECO:0007669"/>
    <property type="project" value="UniProtKB-UniRule"/>
</dbReference>
<dbReference type="FunFam" id="3.30.70.600:FF:000004">
    <property type="entry name" value="30S ribosomal protein S10"/>
    <property type="match status" value="1"/>
</dbReference>
<dbReference type="Gene3D" id="3.30.70.600">
    <property type="entry name" value="Ribosomal protein S10 domain"/>
    <property type="match status" value="1"/>
</dbReference>
<dbReference type="HAMAP" id="MF_00508">
    <property type="entry name" value="Ribosomal_uS10"/>
    <property type="match status" value="1"/>
</dbReference>
<dbReference type="InterPro" id="IPR001848">
    <property type="entry name" value="Ribosomal_uS10"/>
</dbReference>
<dbReference type="InterPro" id="IPR018268">
    <property type="entry name" value="Ribosomal_uS10_CS"/>
</dbReference>
<dbReference type="InterPro" id="IPR027486">
    <property type="entry name" value="Ribosomal_uS10_dom"/>
</dbReference>
<dbReference type="InterPro" id="IPR036838">
    <property type="entry name" value="Ribosomal_uS10_dom_sf"/>
</dbReference>
<dbReference type="InterPro" id="IPR005729">
    <property type="entry name" value="Ribosomal_uS10_euk/arc"/>
</dbReference>
<dbReference type="NCBIfam" id="TIGR01046">
    <property type="entry name" value="uS10_euk_arch"/>
    <property type="match status" value="1"/>
</dbReference>
<dbReference type="PANTHER" id="PTHR11700">
    <property type="entry name" value="30S RIBOSOMAL PROTEIN S10 FAMILY MEMBER"/>
    <property type="match status" value="1"/>
</dbReference>
<dbReference type="Pfam" id="PF00338">
    <property type="entry name" value="Ribosomal_S10"/>
    <property type="match status" value="1"/>
</dbReference>
<dbReference type="PRINTS" id="PR00971">
    <property type="entry name" value="RIBOSOMALS10"/>
</dbReference>
<dbReference type="SMART" id="SM01403">
    <property type="entry name" value="Ribosomal_S10"/>
    <property type="match status" value="1"/>
</dbReference>
<dbReference type="SUPFAM" id="SSF54999">
    <property type="entry name" value="Ribosomal protein S10"/>
    <property type="match status" value="1"/>
</dbReference>
<dbReference type="PROSITE" id="PS00361">
    <property type="entry name" value="RIBOSOMAL_S10"/>
    <property type="match status" value="1"/>
</dbReference>
<accession>P14039</accession>
<accession>A6UQ15</accession>
<reference key="1">
    <citation type="journal article" date="1989" name="J. Mol. Evol.">
        <title>Organization and nucleotide sequence of a transcriptional unit of Methanococcus vannielii comprising genes for protein synthesis elongation factors and ribosomal proteins.</title>
        <authorList>
            <person name="Lechner K."/>
            <person name="Heller G."/>
            <person name="Boeck A."/>
        </authorList>
    </citation>
    <scope>NUCLEOTIDE SEQUENCE [GENOMIC DNA]</scope>
</reference>
<reference key="2">
    <citation type="submission" date="2007-06" db="EMBL/GenBank/DDBJ databases">
        <title>Complete sequence of Methanococcus vannielii SB.</title>
        <authorList>
            <consortium name="US DOE Joint Genome Institute"/>
            <person name="Copeland A."/>
            <person name="Lucas S."/>
            <person name="Lapidus A."/>
            <person name="Barry K."/>
            <person name="Glavina del Rio T."/>
            <person name="Dalin E."/>
            <person name="Tice H."/>
            <person name="Pitluck S."/>
            <person name="Chain P."/>
            <person name="Malfatti S."/>
            <person name="Shin M."/>
            <person name="Vergez L."/>
            <person name="Schmutz J."/>
            <person name="Larimer F."/>
            <person name="Land M."/>
            <person name="Hauser L."/>
            <person name="Kyrpides N."/>
            <person name="Anderson I."/>
            <person name="Sieprawska-Lupa M."/>
            <person name="Whitman W.B."/>
            <person name="Richardson P."/>
        </authorList>
    </citation>
    <scope>NUCLEOTIDE SEQUENCE [LARGE SCALE GENOMIC DNA]</scope>
    <source>
        <strain>ATCC 35089 / DSM 1224 / JCM 13029 / OCM 148 / SB</strain>
    </source>
</reference>
<gene>
    <name evidence="1" type="primary">rps10</name>
    <name type="ordered locus">Mevan_0681</name>
</gene>
<proteinExistence type="inferred from homology"/>
<organism>
    <name type="scientific">Methanococcus vannielii (strain ATCC 35089 / DSM 1224 / JCM 13029 / OCM 148 / SB)</name>
    <dbReference type="NCBI Taxonomy" id="406327"/>
    <lineage>
        <taxon>Archaea</taxon>
        <taxon>Methanobacteriati</taxon>
        <taxon>Methanobacteriota</taxon>
        <taxon>Methanomada group</taxon>
        <taxon>Methanococci</taxon>
        <taxon>Methanococcales</taxon>
        <taxon>Methanococcaceae</taxon>
        <taxon>Methanococcus</taxon>
    </lineage>
</organism>
<feature type="chain" id="PRO_0000146650" description="Small ribosomal subunit protein uS10">
    <location>
        <begin position="1"/>
        <end position="102"/>
    </location>
</feature>
<feature type="region of interest" description="Disordered" evidence="2">
    <location>
        <begin position="37"/>
        <end position="61"/>
    </location>
</feature>
<feature type="sequence conflict" description="In Ref. 1; CAA34093." evidence="3" ref="1">
    <original>RIPDAVQIEIELRS</original>
    <variation>KNS</variation>
    <location>
        <begin position="89"/>
        <end position="102"/>
    </location>
</feature>
<keyword id="KW-0687">Ribonucleoprotein</keyword>
<keyword id="KW-0689">Ribosomal protein</keyword>